<reference key="1">
    <citation type="journal article" date="2002" name="Nucleic Acids Res.">
        <title>Genome sequence of Shigella flexneri 2a: insights into pathogenicity through comparison with genomes of Escherichia coli K12 and O157.</title>
        <authorList>
            <person name="Jin Q."/>
            <person name="Yuan Z."/>
            <person name="Xu J."/>
            <person name="Wang Y."/>
            <person name="Shen Y."/>
            <person name="Lu W."/>
            <person name="Wang J."/>
            <person name="Liu H."/>
            <person name="Yang J."/>
            <person name="Yang F."/>
            <person name="Zhang X."/>
            <person name="Zhang J."/>
            <person name="Yang G."/>
            <person name="Wu H."/>
            <person name="Qu D."/>
            <person name="Dong J."/>
            <person name="Sun L."/>
            <person name="Xue Y."/>
            <person name="Zhao A."/>
            <person name="Gao Y."/>
            <person name="Zhu J."/>
            <person name="Kan B."/>
            <person name="Ding K."/>
            <person name="Chen S."/>
            <person name="Cheng H."/>
            <person name="Yao Z."/>
            <person name="He B."/>
            <person name="Chen R."/>
            <person name="Ma D."/>
            <person name="Qiang B."/>
            <person name="Wen Y."/>
            <person name="Hou Y."/>
            <person name="Yu J."/>
        </authorList>
    </citation>
    <scope>NUCLEOTIDE SEQUENCE [LARGE SCALE GENOMIC DNA]</scope>
    <source>
        <strain>301 / Serotype 2a</strain>
    </source>
</reference>
<reference key="2">
    <citation type="journal article" date="2003" name="Infect. Immun.">
        <title>Complete genome sequence and comparative genomics of Shigella flexneri serotype 2a strain 2457T.</title>
        <authorList>
            <person name="Wei J."/>
            <person name="Goldberg M.B."/>
            <person name="Burland V."/>
            <person name="Venkatesan M.M."/>
            <person name="Deng W."/>
            <person name="Fournier G."/>
            <person name="Mayhew G.F."/>
            <person name="Plunkett G. III"/>
            <person name="Rose D.J."/>
            <person name="Darling A."/>
            <person name="Mau B."/>
            <person name="Perna N.T."/>
            <person name="Payne S.M."/>
            <person name="Runyen-Janecky L.J."/>
            <person name="Zhou S."/>
            <person name="Schwartz D.C."/>
            <person name="Blattner F.R."/>
        </authorList>
    </citation>
    <scope>NUCLEOTIDE SEQUENCE [LARGE SCALE GENOMIC DNA]</scope>
    <source>
        <strain>ATCC 700930 / 2457T / Serotype 2a</strain>
    </source>
</reference>
<keyword id="KW-0028">Amino-acid biosynthesis</keyword>
<keyword id="KW-0963">Cytoplasm</keyword>
<keyword id="KW-0368">Histidine biosynthesis</keyword>
<keyword id="KW-0456">Lyase</keyword>
<keyword id="KW-1185">Reference proteome</keyword>
<proteinExistence type="inferred from homology"/>
<evidence type="ECO:0000255" key="1">
    <source>
        <dbReference type="HAMAP-Rule" id="MF_01013"/>
    </source>
</evidence>
<gene>
    <name evidence="1" type="primary">hisF</name>
    <name type="ordered locus">SF2087</name>
    <name type="ordered locus">S2208</name>
</gene>
<dbReference type="EC" id="4.3.2.10" evidence="1"/>
<dbReference type="EMBL" id="AE005674">
    <property type="protein sequence ID" value="AAN43627.1"/>
    <property type="molecule type" value="Genomic_DNA"/>
</dbReference>
<dbReference type="EMBL" id="AE014073">
    <property type="protein sequence ID" value="AAP17455.1"/>
    <property type="molecule type" value="Genomic_DNA"/>
</dbReference>
<dbReference type="RefSeq" id="NP_707920.1">
    <property type="nucleotide sequence ID" value="NC_004337.2"/>
</dbReference>
<dbReference type="RefSeq" id="WP_000880171.1">
    <property type="nucleotide sequence ID" value="NZ_WPGW01000112.1"/>
</dbReference>
<dbReference type="SMR" id="Q83R03"/>
<dbReference type="STRING" id="198214.SF2087"/>
<dbReference type="PaxDb" id="198214-SF2087"/>
<dbReference type="GeneID" id="1025286"/>
<dbReference type="KEGG" id="sfl:SF2087"/>
<dbReference type="KEGG" id="sfx:S2208"/>
<dbReference type="PATRIC" id="fig|198214.7.peg.2496"/>
<dbReference type="HOGENOM" id="CLU_048577_4_0_6"/>
<dbReference type="UniPathway" id="UPA00031">
    <property type="reaction ID" value="UER00010"/>
</dbReference>
<dbReference type="Proteomes" id="UP000001006">
    <property type="component" value="Chromosome"/>
</dbReference>
<dbReference type="Proteomes" id="UP000002673">
    <property type="component" value="Chromosome"/>
</dbReference>
<dbReference type="GO" id="GO:0005737">
    <property type="term" value="C:cytoplasm"/>
    <property type="evidence" value="ECO:0007669"/>
    <property type="project" value="UniProtKB-SubCell"/>
</dbReference>
<dbReference type="GO" id="GO:0000107">
    <property type="term" value="F:imidazoleglycerol-phosphate synthase activity"/>
    <property type="evidence" value="ECO:0007669"/>
    <property type="project" value="UniProtKB-UniRule"/>
</dbReference>
<dbReference type="GO" id="GO:0016829">
    <property type="term" value="F:lyase activity"/>
    <property type="evidence" value="ECO:0007669"/>
    <property type="project" value="UniProtKB-KW"/>
</dbReference>
<dbReference type="GO" id="GO:0000105">
    <property type="term" value="P:L-histidine biosynthetic process"/>
    <property type="evidence" value="ECO:0007669"/>
    <property type="project" value="UniProtKB-UniRule"/>
</dbReference>
<dbReference type="CDD" id="cd04731">
    <property type="entry name" value="HisF"/>
    <property type="match status" value="1"/>
</dbReference>
<dbReference type="FunFam" id="3.20.20.70:FF:000006">
    <property type="entry name" value="Imidazole glycerol phosphate synthase subunit HisF"/>
    <property type="match status" value="1"/>
</dbReference>
<dbReference type="Gene3D" id="3.20.20.70">
    <property type="entry name" value="Aldolase class I"/>
    <property type="match status" value="1"/>
</dbReference>
<dbReference type="HAMAP" id="MF_01013">
    <property type="entry name" value="HisF"/>
    <property type="match status" value="1"/>
</dbReference>
<dbReference type="InterPro" id="IPR013785">
    <property type="entry name" value="Aldolase_TIM"/>
</dbReference>
<dbReference type="InterPro" id="IPR006062">
    <property type="entry name" value="His_biosynth"/>
</dbReference>
<dbReference type="InterPro" id="IPR004651">
    <property type="entry name" value="HisF"/>
</dbReference>
<dbReference type="InterPro" id="IPR050064">
    <property type="entry name" value="IGPS_HisA/HisF"/>
</dbReference>
<dbReference type="InterPro" id="IPR011060">
    <property type="entry name" value="RibuloseP-bd_barrel"/>
</dbReference>
<dbReference type="NCBIfam" id="TIGR00735">
    <property type="entry name" value="hisF"/>
    <property type="match status" value="1"/>
</dbReference>
<dbReference type="PANTHER" id="PTHR21235:SF2">
    <property type="entry name" value="IMIDAZOLE GLYCEROL PHOSPHATE SYNTHASE HISHF"/>
    <property type="match status" value="1"/>
</dbReference>
<dbReference type="PANTHER" id="PTHR21235">
    <property type="entry name" value="IMIDAZOLE GLYCEROL PHOSPHATE SYNTHASE SUBUNIT HISF/H IGP SYNTHASE SUBUNIT HISF/H"/>
    <property type="match status" value="1"/>
</dbReference>
<dbReference type="Pfam" id="PF00977">
    <property type="entry name" value="His_biosynth"/>
    <property type="match status" value="1"/>
</dbReference>
<dbReference type="SUPFAM" id="SSF51366">
    <property type="entry name" value="Ribulose-phoshate binding barrel"/>
    <property type="match status" value="1"/>
</dbReference>
<accession>Q83R03</accession>
<comment type="function">
    <text evidence="1">IGPS catalyzes the conversion of PRFAR and glutamine to IGP, AICAR and glutamate. The HisF subunit catalyzes the cyclization activity that produces IGP and AICAR from PRFAR using the ammonia provided by the HisH subunit.</text>
</comment>
<comment type="catalytic activity">
    <reaction evidence="1">
        <text>5-[(5-phospho-1-deoxy-D-ribulos-1-ylimino)methylamino]-1-(5-phospho-beta-D-ribosyl)imidazole-4-carboxamide + L-glutamine = D-erythro-1-(imidazol-4-yl)glycerol 3-phosphate + 5-amino-1-(5-phospho-beta-D-ribosyl)imidazole-4-carboxamide + L-glutamate + H(+)</text>
        <dbReference type="Rhea" id="RHEA:24793"/>
        <dbReference type="ChEBI" id="CHEBI:15378"/>
        <dbReference type="ChEBI" id="CHEBI:29985"/>
        <dbReference type="ChEBI" id="CHEBI:58278"/>
        <dbReference type="ChEBI" id="CHEBI:58359"/>
        <dbReference type="ChEBI" id="CHEBI:58475"/>
        <dbReference type="ChEBI" id="CHEBI:58525"/>
        <dbReference type="EC" id="4.3.2.10"/>
    </reaction>
</comment>
<comment type="pathway">
    <text evidence="1">Amino-acid biosynthesis; L-histidine biosynthesis; L-histidine from 5-phospho-alpha-D-ribose 1-diphosphate: step 5/9.</text>
</comment>
<comment type="subunit">
    <text evidence="1">Heterodimer of HisH and HisF.</text>
</comment>
<comment type="subcellular location">
    <subcellularLocation>
        <location evidence="1">Cytoplasm</location>
    </subcellularLocation>
</comment>
<comment type="similarity">
    <text evidence="1">Belongs to the HisA/HisF family.</text>
</comment>
<organism>
    <name type="scientific">Shigella flexneri</name>
    <dbReference type="NCBI Taxonomy" id="623"/>
    <lineage>
        <taxon>Bacteria</taxon>
        <taxon>Pseudomonadati</taxon>
        <taxon>Pseudomonadota</taxon>
        <taxon>Gammaproteobacteria</taxon>
        <taxon>Enterobacterales</taxon>
        <taxon>Enterobacteriaceae</taxon>
        <taxon>Shigella</taxon>
    </lineage>
</organism>
<feature type="chain" id="PRO_0000142229" description="Imidazole glycerol phosphate synthase subunit HisF">
    <location>
        <begin position="1"/>
        <end position="258"/>
    </location>
</feature>
<feature type="active site" evidence="1">
    <location>
        <position position="11"/>
    </location>
</feature>
<feature type="active site" evidence="1">
    <location>
        <position position="130"/>
    </location>
</feature>
<name>HIS6_SHIFL</name>
<protein>
    <recommendedName>
        <fullName evidence="1">Imidazole glycerol phosphate synthase subunit HisF</fullName>
        <ecNumber evidence="1">4.3.2.10</ecNumber>
    </recommendedName>
    <alternativeName>
        <fullName evidence="1">IGP synthase cyclase subunit</fullName>
    </alternativeName>
    <alternativeName>
        <fullName evidence="1">IGP synthase subunit HisF</fullName>
    </alternativeName>
    <alternativeName>
        <fullName evidence="1">ImGP synthase subunit HisF</fullName>
        <shortName evidence="1">IGPS subunit HisF</shortName>
    </alternativeName>
</protein>
<sequence length="258" mass="28401">MLAKRIIPCLDVRDGQVVKGVQFRNHEIIGDIVPLAKRYAEEGADELVFYDITASSDGRVVDKSWVSRVAEVIDIPFCVAGGIKSLEDAAKILSFGADKISINSPALADPTLITRLADRFGVQCIVVGIDTWYDAETGKYHVNQYTGDESRTRVTQWETLDWVEEVQKRGAGEIVLNMMNQDGVCNGYDLKQLKKVREVCHVPLIASGGAGTMEHFLEAFRDADVDGALAASVFHKQIINIGELKAYLATQGVEIRIC</sequence>